<evidence type="ECO:0000255" key="1">
    <source>
        <dbReference type="HAMAP-Rule" id="MF_00195"/>
    </source>
</evidence>
<evidence type="ECO:0000256" key="2">
    <source>
        <dbReference type="SAM" id="MobiDB-lite"/>
    </source>
</evidence>
<organism>
    <name type="scientific">Protochlamydia amoebophila (strain UWE25)</name>
    <dbReference type="NCBI Taxonomy" id="264201"/>
    <lineage>
        <taxon>Bacteria</taxon>
        <taxon>Pseudomonadati</taxon>
        <taxon>Chlamydiota</taxon>
        <taxon>Chlamydiia</taxon>
        <taxon>Parachlamydiales</taxon>
        <taxon>Parachlamydiaceae</taxon>
        <taxon>Candidatus Protochlamydia</taxon>
    </lineage>
</organism>
<gene>
    <name evidence="1" type="primary">der</name>
    <name type="synonym">engA</name>
    <name type="ordered locus">pc1480</name>
</gene>
<dbReference type="EMBL" id="BX908798">
    <property type="protein sequence ID" value="CAF24204.1"/>
    <property type="molecule type" value="Genomic_DNA"/>
</dbReference>
<dbReference type="RefSeq" id="WP_011176027.1">
    <property type="nucleotide sequence ID" value="NC_005861.2"/>
</dbReference>
<dbReference type="SMR" id="Q6MB45"/>
<dbReference type="STRING" id="264201.pc1480"/>
<dbReference type="KEGG" id="pcu:PC_RS07105"/>
<dbReference type="eggNOG" id="COG1160">
    <property type="taxonomic scope" value="Bacteria"/>
</dbReference>
<dbReference type="HOGENOM" id="CLU_016077_6_2_0"/>
<dbReference type="OrthoDB" id="9805918at2"/>
<dbReference type="Proteomes" id="UP000000529">
    <property type="component" value="Chromosome"/>
</dbReference>
<dbReference type="GO" id="GO:0005525">
    <property type="term" value="F:GTP binding"/>
    <property type="evidence" value="ECO:0007669"/>
    <property type="project" value="UniProtKB-UniRule"/>
</dbReference>
<dbReference type="GO" id="GO:0043022">
    <property type="term" value="F:ribosome binding"/>
    <property type="evidence" value="ECO:0007669"/>
    <property type="project" value="TreeGrafter"/>
</dbReference>
<dbReference type="GO" id="GO:0042254">
    <property type="term" value="P:ribosome biogenesis"/>
    <property type="evidence" value="ECO:0007669"/>
    <property type="project" value="UniProtKB-KW"/>
</dbReference>
<dbReference type="CDD" id="cd01894">
    <property type="entry name" value="EngA1"/>
    <property type="match status" value="1"/>
</dbReference>
<dbReference type="CDD" id="cd01895">
    <property type="entry name" value="EngA2"/>
    <property type="match status" value="1"/>
</dbReference>
<dbReference type="FunFam" id="3.30.300.20:FF:000004">
    <property type="entry name" value="GTPase Der"/>
    <property type="match status" value="1"/>
</dbReference>
<dbReference type="FunFam" id="3.40.50.300:FF:000040">
    <property type="entry name" value="GTPase Der"/>
    <property type="match status" value="1"/>
</dbReference>
<dbReference type="FunFam" id="3.40.50.300:FF:000057">
    <property type="entry name" value="GTPase Der"/>
    <property type="match status" value="1"/>
</dbReference>
<dbReference type="Gene3D" id="3.30.300.20">
    <property type="match status" value="1"/>
</dbReference>
<dbReference type="Gene3D" id="3.40.50.300">
    <property type="entry name" value="P-loop containing nucleotide triphosphate hydrolases"/>
    <property type="match status" value="2"/>
</dbReference>
<dbReference type="HAMAP" id="MF_00195">
    <property type="entry name" value="GTPase_Der"/>
    <property type="match status" value="1"/>
</dbReference>
<dbReference type="InterPro" id="IPR031166">
    <property type="entry name" value="G_ENGA"/>
</dbReference>
<dbReference type="InterPro" id="IPR006073">
    <property type="entry name" value="GTP-bd"/>
</dbReference>
<dbReference type="InterPro" id="IPR016484">
    <property type="entry name" value="GTPase_Der"/>
</dbReference>
<dbReference type="InterPro" id="IPR032859">
    <property type="entry name" value="KH_dom-like"/>
</dbReference>
<dbReference type="InterPro" id="IPR015946">
    <property type="entry name" value="KH_dom-like_a/b"/>
</dbReference>
<dbReference type="InterPro" id="IPR027417">
    <property type="entry name" value="P-loop_NTPase"/>
</dbReference>
<dbReference type="InterPro" id="IPR005225">
    <property type="entry name" value="Small_GTP-bd"/>
</dbReference>
<dbReference type="NCBIfam" id="TIGR03594">
    <property type="entry name" value="GTPase_EngA"/>
    <property type="match status" value="1"/>
</dbReference>
<dbReference type="NCBIfam" id="TIGR00231">
    <property type="entry name" value="small_GTP"/>
    <property type="match status" value="2"/>
</dbReference>
<dbReference type="PANTHER" id="PTHR43834">
    <property type="entry name" value="GTPASE DER"/>
    <property type="match status" value="1"/>
</dbReference>
<dbReference type="PANTHER" id="PTHR43834:SF6">
    <property type="entry name" value="GTPASE DER"/>
    <property type="match status" value="1"/>
</dbReference>
<dbReference type="Pfam" id="PF14714">
    <property type="entry name" value="KH_dom-like"/>
    <property type="match status" value="1"/>
</dbReference>
<dbReference type="Pfam" id="PF01926">
    <property type="entry name" value="MMR_HSR1"/>
    <property type="match status" value="2"/>
</dbReference>
<dbReference type="PIRSF" id="PIRSF006485">
    <property type="entry name" value="GTP-binding_EngA"/>
    <property type="match status" value="1"/>
</dbReference>
<dbReference type="PRINTS" id="PR00449">
    <property type="entry name" value="RASTRNSFRMNG"/>
</dbReference>
<dbReference type="SUPFAM" id="SSF52540">
    <property type="entry name" value="P-loop containing nucleoside triphosphate hydrolases"/>
    <property type="match status" value="2"/>
</dbReference>
<dbReference type="PROSITE" id="PS51712">
    <property type="entry name" value="G_ENGA"/>
    <property type="match status" value="2"/>
</dbReference>
<comment type="function">
    <text evidence="1">GTPase that plays an essential role in the late steps of ribosome biogenesis.</text>
</comment>
<comment type="subunit">
    <text evidence="1">Associates with the 50S ribosomal subunit.</text>
</comment>
<comment type="similarity">
    <text evidence="1">Belongs to the TRAFAC class TrmE-Era-EngA-EngB-Septin-like GTPase superfamily. EngA (Der) GTPase family.</text>
</comment>
<proteinExistence type="inferred from homology"/>
<feature type="chain" id="PRO_1000071705" description="GTPase Der">
    <location>
        <begin position="1"/>
        <end position="487"/>
    </location>
</feature>
<feature type="domain" description="EngA-type G 1">
    <location>
        <begin position="5"/>
        <end position="169"/>
    </location>
</feature>
<feature type="domain" description="EngA-type G 2">
    <location>
        <begin position="178"/>
        <end position="351"/>
    </location>
</feature>
<feature type="domain" description="KH-like" evidence="1">
    <location>
        <begin position="352"/>
        <end position="439"/>
    </location>
</feature>
<feature type="region of interest" description="Disordered" evidence="2">
    <location>
        <begin position="441"/>
        <end position="466"/>
    </location>
</feature>
<feature type="binding site" evidence="1">
    <location>
        <begin position="11"/>
        <end position="18"/>
    </location>
    <ligand>
        <name>GTP</name>
        <dbReference type="ChEBI" id="CHEBI:37565"/>
        <label>1</label>
    </ligand>
</feature>
<feature type="binding site" evidence="1">
    <location>
        <begin position="58"/>
        <end position="62"/>
    </location>
    <ligand>
        <name>GTP</name>
        <dbReference type="ChEBI" id="CHEBI:37565"/>
        <label>1</label>
    </ligand>
</feature>
<feature type="binding site" evidence="1">
    <location>
        <begin position="121"/>
        <end position="124"/>
    </location>
    <ligand>
        <name>GTP</name>
        <dbReference type="ChEBI" id="CHEBI:37565"/>
        <label>1</label>
    </ligand>
</feature>
<feature type="binding site" evidence="1">
    <location>
        <begin position="184"/>
        <end position="191"/>
    </location>
    <ligand>
        <name>GTP</name>
        <dbReference type="ChEBI" id="CHEBI:37565"/>
        <label>2</label>
    </ligand>
</feature>
<feature type="binding site" evidence="1">
    <location>
        <begin position="231"/>
        <end position="235"/>
    </location>
    <ligand>
        <name>GTP</name>
        <dbReference type="ChEBI" id="CHEBI:37565"/>
        <label>2</label>
    </ligand>
</feature>
<feature type="binding site" evidence="1">
    <location>
        <begin position="296"/>
        <end position="299"/>
    </location>
    <ligand>
        <name>GTP</name>
        <dbReference type="ChEBI" id="CHEBI:37565"/>
        <label>2</label>
    </ligand>
</feature>
<reference key="1">
    <citation type="journal article" date="2004" name="Science">
        <title>Illuminating the evolutionary history of chlamydiae.</title>
        <authorList>
            <person name="Horn M."/>
            <person name="Collingro A."/>
            <person name="Schmitz-Esser S."/>
            <person name="Beier C.L."/>
            <person name="Purkhold U."/>
            <person name="Fartmann B."/>
            <person name="Brandt P."/>
            <person name="Nyakatura G.J."/>
            <person name="Droege M."/>
            <person name="Frishman D."/>
            <person name="Rattei T."/>
            <person name="Mewes H.-W."/>
            <person name="Wagner M."/>
        </authorList>
    </citation>
    <scope>NUCLEOTIDE SEQUENCE [LARGE SCALE GENOMIC DNA]</scope>
    <source>
        <strain>UWE25</strain>
    </source>
</reference>
<keyword id="KW-0342">GTP-binding</keyword>
<keyword id="KW-0547">Nucleotide-binding</keyword>
<keyword id="KW-1185">Reference proteome</keyword>
<keyword id="KW-0677">Repeat</keyword>
<keyword id="KW-0690">Ribosome biogenesis</keyword>
<sequence>MTHLPKLAIVGRPNVGKSALFNRICKQKIAIVDEAEGITRDRLYAEGELFGLHFQVIDTGGINARSKEVFNEEIKRQAEIAIEEADTIVQVVDAHVGLTELDKEVARVLLRTKKPVCLAVNKIDNLSQTSLMHQFHSLGIKQMIPVSAAQGWQIAELLETAFEKISREIESQETFSSIKVAIVGRANVGKSSLVNYLLDEDRCIVSPIPGTTRDSVDISFTHKDECYTLIDTAGIRRKRAEHEVVDKFAAIRTERAIERADLCVLMLDVQEGITAQDKKIANTIEEAGQGCIILLNKWDLVQGFRMEHCLQNLEEEVPFLRHCPKIFTSAKTGRNIDKLFPLIQEVYANSQKRITTHQLNKFIGEALQKNHPPMIQGKRLRIYYMAQVAVKPPKFILFVNYPNLMTDTYKKYLYNQFREAYAFTGVPILIHLKGKTKKDKPVSSLSLTRKQTKSTDQENNEYDELYQEQRVSDEDYYFENEEDLTEK</sequence>
<protein>
    <recommendedName>
        <fullName evidence="1">GTPase Der</fullName>
    </recommendedName>
    <alternativeName>
        <fullName evidence="1">GTP-binding protein EngA</fullName>
    </alternativeName>
</protein>
<accession>Q6MB45</accession>
<name>DER_PARUW</name>